<keyword id="KW-0929">Antimicrobial</keyword>
<keyword id="KW-1015">Disulfide bond</keyword>
<keyword id="KW-0295">Fungicide</keyword>
<keyword id="KW-0611">Plant defense</keyword>
<keyword id="KW-1185">Reference proteome</keyword>
<keyword id="KW-0964">Secreted</keyword>
<keyword id="KW-0732">Signal</keyword>
<comment type="subcellular location">
    <subcellularLocation>
        <location evidence="1">Secreted</location>
    </subcellularLocation>
</comment>
<comment type="similarity">
    <text evidence="3">Belongs to the DEFL family.</text>
</comment>
<feature type="signal peptide" evidence="2">
    <location>
        <begin position="1"/>
        <end position="28"/>
    </location>
</feature>
<feature type="chain" id="PRO_0000379630" description="Putative defensin-like protein 48">
    <location>
        <begin position="29"/>
        <end position="82"/>
    </location>
</feature>
<feature type="disulfide bond" evidence="1">
    <location>
        <begin position="39"/>
        <end position="80"/>
    </location>
</feature>
<feature type="disulfide bond" evidence="1">
    <location>
        <begin position="43"/>
        <end position="67"/>
    </location>
</feature>
<feature type="disulfide bond" evidence="1">
    <location>
        <begin position="53"/>
        <end position="78"/>
    </location>
</feature>
<feature type="disulfide bond" evidence="1">
    <location>
        <begin position="57"/>
        <end position="79"/>
    </location>
</feature>
<accession>Q2V365</accession>
<dbReference type="EMBL" id="AC069326">
    <property type="status" value="NOT_ANNOTATED_CDS"/>
    <property type="molecule type" value="Genomic_DNA"/>
</dbReference>
<dbReference type="EMBL" id="CP002688">
    <property type="protein sequence ID" value="AED92666.1"/>
    <property type="molecule type" value="Genomic_DNA"/>
</dbReference>
<dbReference type="RefSeq" id="NP_001031902.1">
    <property type="nucleotide sequence ID" value="NM_001036825.2"/>
</dbReference>
<dbReference type="PaxDb" id="3702-AT5G19175.1"/>
<dbReference type="ProteomicsDB" id="222202"/>
<dbReference type="EnsemblPlants" id="AT5G19175.1">
    <property type="protein sequence ID" value="AT5G19175.1"/>
    <property type="gene ID" value="AT5G19175"/>
</dbReference>
<dbReference type="GeneID" id="3770621"/>
<dbReference type="Gramene" id="AT5G19175.1">
    <property type="protein sequence ID" value="AT5G19175.1"/>
    <property type="gene ID" value="AT5G19175"/>
</dbReference>
<dbReference type="KEGG" id="ath:AT5G19175"/>
<dbReference type="Araport" id="AT5G19175"/>
<dbReference type="TAIR" id="AT5G19175"/>
<dbReference type="HOGENOM" id="CLU_165205_1_0_1"/>
<dbReference type="InParanoid" id="Q2V365"/>
<dbReference type="OMA" id="DPIRCCC"/>
<dbReference type="PhylomeDB" id="Q2V365"/>
<dbReference type="PRO" id="PR:Q2V365"/>
<dbReference type="Proteomes" id="UP000006548">
    <property type="component" value="Chromosome 5"/>
</dbReference>
<dbReference type="ExpressionAtlas" id="Q2V365">
    <property type="expression patterns" value="baseline and differential"/>
</dbReference>
<dbReference type="GO" id="GO:0005576">
    <property type="term" value="C:extracellular region"/>
    <property type="evidence" value="ECO:0007669"/>
    <property type="project" value="UniProtKB-SubCell"/>
</dbReference>
<dbReference type="GO" id="GO:0050832">
    <property type="term" value="P:defense response to fungus"/>
    <property type="evidence" value="ECO:0007669"/>
    <property type="project" value="UniProtKB-KW"/>
</dbReference>
<dbReference type="GO" id="GO:0031640">
    <property type="term" value="P:killing of cells of another organism"/>
    <property type="evidence" value="ECO:0007669"/>
    <property type="project" value="UniProtKB-KW"/>
</dbReference>
<dbReference type="InterPro" id="IPR056373">
    <property type="entry name" value="Defensin-like_dom"/>
</dbReference>
<dbReference type="Pfam" id="PF24552">
    <property type="entry name" value="Defensin"/>
    <property type="match status" value="1"/>
</dbReference>
<reference key="1">
    <citation type="journal article" date="2000" name="Nature">
        <title>Sequence and analysis of chromosome 5 of the plant Arabidopsis thaliana.</title>
        <authorList>
            <person name="Tabata S."/>
            <person name="Kaneko T."/>
            <person name="Nakamura Y."/>
            <person name="Kotani H."/>
            <person name="Kato T."/>
            <person name="Asamizu E."/>
            <person name="Miyajima N."/>
            <person name="Sasamoto S."/>
            <person name="Kimura T."/>
            <person name="Hosouchi T."/>
            <person name="Kawashima K."/>
            <person name="Kohara M."/>
            <person name="Matsumoto M."/>
            <person name="Matsuno A."/>
            <person name="Muraki A."/>
            <person name="Nakayama S."/>
            <person name="Nakazaki N."/>
            <person name="Naruo K."/>
            <person name="Okumura S."/>
            <person name="Shinpo S."/>
            <person name="Takeuchi C."/>
            <person name="Wada T."/>
            <person name="Watanabe A."/>
            <person name="Yamada M."/>
            <person name="Yasuda M."/>
            <person name="Sato S."/>
            <person name="de la Bastide M."/>
            <person name="Huang E."/>
            <person name="Spiegel L."/>
            <person name="Gnoj L."/>
            <person name="O'Shaughnessy A."/>
            <person name="Preston R."/>
            <person name="Habermann K."/>
            <person name="Murray J."/>
            <person name="Johnson D."/>
            <person name="Rohlfing T."/>
            <person name="Nelson J."/>
            <person name="Stoneking T."/>
            <person name="Pepin K."/>
            <person name="Spieth J."/>
            <person name="Sekhon M."/>
            <person name="Armstrong J."/>
            <person name="Becker M."/>
            <person name="Belter E."/>
            <person name="Cordum H."/>
            <person name="Cordes M."/>
            <person name="Courtney L."/>
            <person name="Courtney W."/>
            <person name="Dante M."/>
            <person name="Du H."/>
            <person name="Edwards J."/>
            <person name="Fryman J."/>
            <person name="Haakensen B."/>
            <person name="Lamar E."/>
            <person name="Latreille P."/>
            <person name="Leonard S."/>
            <person name="Meyer R."/>
            <person name="Mulvaney E."/>
            <person name="Ozersky P."/>
            <person name="Riley A."/>
            <person name="Strowmatt C."/>
            <person name="Wagner-McPherson C."/>
            <person name="Wollam A."/>
            <person name="Yoakum M."/>
            <person name="Bell M."/>
            <person name="Dedhia N."/>
            <person name="Parnell L."/>
            <person name="Shah R."/>
            <person name="Rodriguez M."/>
            <person name="Hoon See L."/>
            <person name="Vil D."/>
            <person name="Baker J."/>
            <person name="Kirchoff K."/>
            <person name="Toth K."/>
            <person name="King L."/>
            <person name="Bahret A."/>
            <person name="Miller B."/>
            <person name="Marra M.A."/>
            <person name="Martienssen R."/>
            <person name="McCombie W.R."/>
            <person name="Wilson R.K."/>
            <person name="Murphy G."/>
            <person name="Bancroft I."/>
            <person name="Volckaert G."/>
            <person name="Wambutt R."/>
            <person name="Duesterhoeft A."/>
            <person name="Stiekema W."/>
            <person name="Pohl T."/>
            <person name="Entian K.-D."/>
            <person name="Terryn N."/>
            <person name="Hartley N."/>
            <person name="Bent E."/>
            <person name="Johnson S."/>
            <person name="Langham S.-A."/>
            <person name="McCullagh B."/>
            <person name="Robben J."/>
            <person name="Grymonprez B."/>
            <person name="Zimmermann W."/>
            <person name="Ramsperger U."/>
            <person name="Wedler H."/>
            <person name="Balke K."/>
            <person name="Wedler E."/>
            <person name="Peters S."/>
            <person name="van Staveren M."/>
            <person name="Dirkse W."/>
            <person name="Mooijman P."/>
            <person name="Klein Lankhorst R."/>
            <person name="Weitzenegger T."/>
            <person name="Bothe G."/>
            <person name="Rose M."/>
            <person name="Hauf J."/>
            <person name="Berneiser S."/>
            <person name="Hempel S."/>
            <person name="Feldpausch M."/>
            <person name="Lamberth S."/>
            <person name="Villarroel R."/>
            <person name="Gielen J."/>
            <person name="Ardiles W."/>
            <person name="Bents O."/>
            <person name="Lemcke K."/>
            <person name="Kolesov G."/>
            <person name="Mayer K.F.X."/>
            <person name="Rudd S."/>
            <person name="Schoof H."/>
            <person name="Schueller C."/>
            <person name="Zaccaria P."/>
            <person name="Mewes H.-W."/>
            <person name="Bevan M."/>
            <person name="Fransz P.F."/>
        </authorList>
    </citation>
    <scope>NUCLEOTIDE SEQUENCE [LARGE SCALE GENOMIC DNA]</scope>
    <source>
        <strain>cv. Columbia</strain>
    </source>
</reference>
<reference key="2">
    <citation type="journal article" date="2017" name="Plant J.">
        <title>Araport11: a complete reannotation of the Arabidopsis thaliana reference genome.</title>
        <authorList>
            <person name="Cheng C.Y."/>
            <person name="Krishnakumar V."/>
            <person name="Chan A.P."/>
            <person name="Thibaud-Nissen F."/>
            <person name="Schobel S."/>
            <person name="Town C.D."/>
        </authorList>
    </citation>
    <scope>GENOME REANNOTATION</scope>
    <source>
        <strain>cv. Columbia</strain>
    </source>
</reference>
<reference key="3">
    <citation type="journal article" date="2005" name="Plant Physiol.">
        <title>Genome organization of more than 300 defensin-like genes in Arabidopsis.</title>
        <authorList>
            <person name="Silverstein K.A.T."/>
            <person name="Graham M.A."/>
            <person name="Paape T.D."/>
            <person name="VandenBosch K.A."/>
        </authorList>
    </citation>
    <scope>GENE FAMILY</scope>
</reference>
<proteinExistence type="inferred from homology"/>
<sequence length="82" mass="9273">MGIKTLIIFFHIFILAVLSSNNIILTSGAEIKKFSYDHCFHLCVAGEYGSNECFVDCAQKGFWHGDCANRTEKDPIRCCCYN</sequence>
<evidence type="ECO:0000250" key="1"/>
<evidence type="ECO:0000255" key="2"/>
<evidence type="ECO:0000305" key="3"/>
<protein>
    <recommendedName>
        <fullName>Putative defensin-like protein 48</fullName>
    </recommendedName>
</protein>
<name>DEF48_ARATH</name>
<organism>
    <name type="scientific">Arabidopsis thaliana</name>
    <name type="common">Mouse-ear cress</name>
    <dbReference type="NCBI Taxonomy" id="3702"/>
    <lineage>
        <taxon>Eukaryota</taxon>
        <taxon>Viridiplantae</taxon>
        <taxon>Streptophyta</taxon>
        <taxon>Embryophyta</taxon>
        <taxon>Tracheophyta</taxon>
        <taxon>Spermatophyta</taxon>
        <taxon>Magnoliopsida</taxon>
        <taxon>eudicotyledons</taxon>
        <taxon>Gunneridae</taxon>
        <taxon>Pentapetalae</taxon>
        <taxon>rosids</taxon>
        <taxon>malvids</taxon>
        <taxon>Brassicales</taxon>
        <taxon>Brassicaceae</taxon>
        <taxon>Camelineae</taxon>
        <taxon>Arabidopsis</taxon>
    </lineage>
</organism>
<gene>
    <name type="ordered locus">At5g19175</name>
    <name type="ORF">T24G5</name>
</gene>